<evidence type="ECO:0000255" key="1">
    <source>
        <dbReference type="HAMAP-Rule" id="MF_01398"/>
    </source>
</evidence>
<dbReference type="EMBL" id="BA000034">
    <property type="protein sequence ID" value="BAC64454.1"/>
    <property type="molecule type" value="Genomic_DNA"/>
</dbReference>
<dbReference type="RefSeq" id="WP_011054329.1">
    <property type="nucleotide sequence ID" value="NC_004606.1"/>
</dbReference>
<dbReference type="SMR" id="P0CZ93"/>
<dbReference type="KEGG" id="sps:SPs1359"/>
<dbReference type="HOGENOM" id="CLU_079215_4_2_9"/>
<dbReference type="GO" id="GO:0005886">
    <property type="term" value="C:plasma membrane"/>
    <property type="evidence" value="ECO:0007669"/>
    <property type="project" value="UniProtKB-SubCell"/>
</dbReference>
<dbReference type="GO" id="GO:0045259">
    <property type="term" value="C:proton-transporting ATP synthase complex"/>
    <property type="evidence" value="ECO:0007669"/>
    <property type="project" value="UniProtKB-KW"/>
</dbReference>
<dbReference type="GO" id="GO:0046933">
    <property type="term" value="F:proton-transporting ATP synthase activity, rotational mechanism"/>
    <property type="evidence" value="ECO:0007669"/>
    <property type="project" value="UniProtKB-UniRule"/>
</dbReference>
<dbReference type="GO" id="GO:0046961">
    <property type="term" value="F:proton-transporting ATPase activity, rotational mechanism"/>
    <property type="evidence" value="ECO:0007669"/>
    <property type="project" value="TreeGrafter"/>
</dbReference>
<dbReference type="CDD" id="cd06503">
    <property type="entry name" value="ATP-synt_Fo_b"/>
    <property type="match status" value="1"/>
</dbReference>
<dbReference type="HAMAP" id="MF_01398">
    <property type="entry name" value="ATP_synth_b_bprime"/>
    <property type="match status" value="1"/>
</dbReference>
<dbReference type="InterPro" id="IPR028987">
    <property type="entry name" value="ATP_synth_B-like_membr_sf"/>
</dbReference>
<dbReference type="InterPro" id="IPR002146">
    <property type="entry name" value="ATP_synth_b/b'su_bac/chlpt"/>
</dbReference>
<dbReference type="InterPro" id="IPR005864">
    <property type="entry name" value="ATP_synth_F0_bsu_bac"/>
</dbReference>
<dbReference type="InterPro" id="IPR050059">
    <property type="entry name" value="ATP_synthase_B_chain"/>
</dbReference>
<dbReference type="NCBIfam" id="TIGR01144">
    <property type="entry name" value="ATP_synt_b"/>
    <property type="match status" value="1"/>
</dbReference>
<dbReference type="PANTHER" id="PTHR33445:SF1">
    <property type="entry name" value="ATP SYNTHASE SUBUNIT B"/>
    <property type="match status" value="1"/>
</dbReference>
<dbReference type="PANTHER" id="PTHR33445">
    <property type="entry name" value="ATP SYNTHASE SUBUNIT B', CHLOROPLASTIC"/>
    <property type="match status" value="1"/>
</dbReference>
<dbReference type="Pfam" id="PF00430">
    <property type="entry name" value="ATP-synt_B"/>
    <property type="match status" value="1"/>
</dbReference>
<dbReference type="SUPFAM" id="SSF81573">
    <property type="entry name" value="F1F0 ATP synthase subunit B, membrane domain"/>
    <property type="match status" value="1"/>
</dbReference>
<reference key="1">
    <citation type="journal article" date="2003" name="Genome Res.">
        <title>Genome sequence of an M3 strain of Streptococcus pyogenes reveals a large-scale genomic rearrangement in invasive strains and new insights into phage evolution.</title>
        <authorList>
            <person name="Nakagawa I."/>
            <person name="Kurokawa K."/>
            <person name="Yamashita A."/>
            <person name="Nakata M."/>
            <person name="Tomiyasu Y."/>
            <person name="Okahashi N."/>
            <person name="Kawabata S."/>
            <person name="Yamazaki K."/>
            <person name="Shiba T."/>
            <person name="Yasunaga T."/>
            <person name="Hayashi H."/>
            <person name="Hattori M."/>
            <person name="Hamada S."/>
        </authorList>
    </citation>
    <scope>NUCLEOTIDE SEQUENCE [LARGE SCALE GENOMIC DNA]</scope>
    <source>
        <strain>SSI-1</strain>
    </source>
</reference>
<gene>
    <name evidence="1" type="primary">atpF</name>
    <name type="ordered locus">SPs1359</name>
</gene>
<sequence length="164" mass="17781">MSITFGELVGNFILVTGSVIVLLLLIKKFAWGAIESILQTRSQQISRDIDQAEQSRLSAQQLEAKSQANLDASRSQASKIISDAKEIGQLQGDKLVAEATDEAKRLKEKALTDIEQSKSDAISAVKTEMSDLTVLLAKKIMGANLDKTAQSQLIDSYLDDLGEA</sequence>
<keyword id="KW-0066">ATP synthesis</keyword>
<keyword id="KW-1003">Cell membrane</keyword>
<keyword id="KW-0138">CF(0)</keyword>
<keyword id="KW-0375">Hydrogen ion transport</keyword>
<keyword id="KW-0406">Ion transport</keyword>
<keyword id="KW-0472">Membrane</keyword>
<keyword id="KW-0812">Transmembrane</keyword>
<keyword id="KW-1133">Transmembrane helix</keyword>
<keyword id="KW-0813">Transport</keyword>
<organism>
    <name type="scientific">Streptococcus pyogenes serotype M3 (strain SSI-1)</name>
    <dbReference type="NCBI Taxonomy" id="193567"/>
    <lineage>
        <taxon>Bacteria</taxon>
        <taxon>Bacillati</taxon>
        <taxon>Bacillota</taxon>
        <taxon>Bacilli</taxon>
        <taxon>Lactobacillales</taxon>
        <taxon>Streptococcaceae</taxon>
        <taxon>Streptococcus</taxon>
    </lineage>
</organism>
<name>ATPF_STRPQ</name>
<protein>
    <recommendedName>
        <fullName evidence="1">ATP synthase subunit b</fullName>
    </recommendedName>
    <alternativeName>
        <fullName evidence="1">ATP synthase F(0) sector subunit b</fullName>
    </alternativeName>
    <alternativeName>
        <fullName evidence="1">ATPase subunit I</fullName>
    </alternativeName>
    <alternativeName>
        <fullName evidence="1">F-type ATPase subunit b</fullName>
        <shortName evidence="1">F-ATPase subunit b</shortName>
    </alternativeName>
</protein>
<comment type="function">
    <text evidence="1">F(1)F(0) ATP synthase produces ATP from ADP in the presence of a proton or sodium gradient. F-type ATPases consist of two structural domains, F(1) containing the extramembraneous catalytic core and F(0) containing the membrane proton channel, linked together by a central stalk and a peripheral stalk. During catalysis, ATP synthesis in the catalytic domain of F(1) is coupled via a rotary mechanism of the central stalk subunits to proton translocation.</text>
</comment>
<comment type="function">
    <text evidence="1">Component of the F(0) channel, it forms part of the peripheral stalk, linking F(1) to F(0).</text>
</comment>
<comment type="subunit">
    <text evidence="1">F-type ATPases have 2 components, F(1) - the catalytic core - and F(0) - the membrane proton channel. F(1) has five subunits: alpha(3), beta(3), gamma(1), delta(1), epsilon(1). F(0) has three main subunits: a(1), b(2) and c(10-14). The alpha and beta chains form an alternating ring which encloses part of the gamma chain. F(1) is attached to F(0) by a central stalk formed by the gamma and epsilon chains, while a peripheral stalk is formed by the delta and b chains.</text>
</comment>
<comment type="subcellular location">
    <subcellularLocation>
        <location evidence="1">Cell membrane</location>
        <topology evidence="1">Single-pass membrane protein</topology>
    </subcellularLocation>
</comment>
<comment type="similarity">
    <text evidence="1">Belongs to the ATPase B chain family.</text>
</comment>
<feature type="chain" id="PRO_0000411288" description="ATP synthase subunit b">
    <location>
        <begin position="1"/>
        <end position="164"/>
    </location>
</feature>
<feature type="transmembrane region" description="Helical" evidence="1">
    <location>
        <begin position="6"/>
        <end position="26"/>
    </location>
</feature>
<proteinExistence type="inferred from homology"/>
<accession>P0CZ93</accession>
<accession>Q79WQ2</accession>
<accession>Q8K829</accession>